<keyword id="KW-0378">Hydrolase</keyword>
<keyword id="KW-0511">Multifunctional enzyme</keyword>
<keyword id="KW-0658">Purine biosynthesis</keyword>
<keyword id="KW-0808">Transferase</keyword>
<evidence type="ECO:0000255" key="1">
    <source>
        <dbReference type="HAMAP-Rule" id="MF_00139"/>
    </source>
</evidence>
<evidence type="ECO:0000255" key="2">
    <source>
        <dbReference type="PROSITE-ProRule" id="PRU01202"/>
    </source>
</evidence>
<gene>
    <name evidence="1" type="primary">purH</name>
    <name type="ordered locus">BamMC406_0610</name>
</gene>
<comment type="catalytic activity">
    <reaction evidence="1">
        <text>(6R)-10-formyltetrahydrofolate + 5-amino-1-(5-phospho-beta-D-ribosyl)imidazole-4-carboxamide = 5-formamido-1-(5-phospho-D-ribosyl)imidazole-4-carboxamide + (6S)-5,6,7,8-tetrahydrofolate</text>
        <dbReference type="Rhea" id="RHEA:22192"/>
        <dbReference type="ChEBI" id="CHEBI:57453"/>
        <dbReference type="ChEBI" id="CHEBI:58467"/>
        <dbReference type="ChEBI" id="CHEBI:58475"/>
        <dbReference type="ChEBI" id="CHEBI:195366"/>
        <dbReference type="EC" id="2.1.2.3"/>
    </reaction>
</comment>
<comment type="catalytic activity">
    <reaction evidence="1">
        <text>IMP + H2O = 5-formamido-1-(5-phospho-D-ribosyl)imidazole-4-carboxamide</text>
        <dbReference type="Rhea" id="RHEA:18445"/>
        <dbReference type="ChEBI" id="CHEBI:15377"/>
        <dbReference type="ChEBI" id="CHEBI:58053"/>
        <dbReference type="ChEBI" id="CHEBI:58467"/>
        <dbReference type="EC" id="3.5.4.10"/>
    </reaction>
</comment>
<comment type="pathway">
    <text evidence="1">Purine metabolism; IMP biosynthesis via de novo pathway; 5-formamido-1-(5-phospho-D-ribosyl)imidazole-4-carboxamide from 5-amino-1-(5-phospho-D-ribosyl)imidazole-4-carboxamide (10-formyl THF route): step 1/1.</text>
</comment>
<comment type="pathway">
    <text evidence="1">Purine metabolism; IMP biosynthesis via de novo pathway; IMP from 5-formamido-1-(5-phospho-D-ribosyl)imidazole-4-carboxamide: step 1/1.</text>
</comment>
<comment type="domain">
    <text evidence="1">The IMP cyclohydrolase activity resides in the N-terminal region.</text>
</comment>
<comment type="similarity">
    <text evidence="1">Belongs to the PurH family.</text>
</comment>
<sequence length="521" mass="55493">MIKQALISVSDKTGIVDFAKSLSDLGVKLLSTGGTAKLLADAGLPVTEVADYTGFPEMLDGRVKTLHPKVHGGILARRDLPEHMQALEQHDIPTIDLLVVNLYPFVATIAKDDCTLADAIENIDIGGPTMLRSAAKNHRDVTVVVDPADYAVVLDEMKANGNAIGYATNFRLATKVFAHTAQYDGAITNYLTSLTDELQHASRSAYPATLNMAFDKVQDLRYGENPHQSAAFYRDLAAPAGALANYRQLQGKELSYNNIADSDAAWECVKTFDAPACVIIKHANPCGVAVGNDSADAYAKAFQTDPTSAFGGIIAFNREVDEAAAQAVAKQFVEVLIAPSFSDAAKQVFAAKQNVRLLEIALGDGHNAFDLKRVGGGLLVQSLDSKNVQPSELRVVTKRQPSAKEMDDLLFAWRVAKYVKSNAIVFCGNGMTLGVGAGQMSRVDSARIASIKAQNAGLTLAGSAVASDAFFPFRDGLDVVVAAGATCVIQPGGSMRDDEVIAAADEHGIAMILTGVRHFRH</sequence>
<accession>B1YTE2</accession>
<organism>
    <name type="scientific">Burkholderia ambifaria (strain MC40-6)</name>
    <dbReference type="NCBI Taxonomy" id="398577"/>
    <lineage>
        <taxon>Bacteria</taxon>
        <taxon>Pseudomonadati</taxon>
        <taxon>Pseudomonadota</taxon>
        <taxon>Betaproteobacteria</taxon>
        <taxon>Burkholderiales</taxon>
        <taxon>Burkholderiaceae</taxon>
        <taxon>Burkholderia</taxon>
        <taxon>Burkholderia cepacia complex</taxon>
    </lineage>
</organism>
<feature type="chain" id="PRO_1000096043" description="Bifunctional purine biosynthesis protein PurH">
    <location>
        <begin position="1"/>
        <end position="521"/>
    </location>
</feature>
<feature type="domain" description="MGS-like" evidence="2">
    <location>
        <begin position="1"/>
        <end position="145"/>
    </location>
</feature>
<reference key="1">
    <citation type="submission" date="2008-04" db="EMBL/GenBank/DDBJ databases">
        <title>Complete sequence of chromosome 1 of Burkholderia ambifaria MC40-6.</title>
        <authorList>
            <person name="Copeland A."/>
            <person name="Lucas S."/>
            <person name="Lapidus A."/>
            <person name="Glavina del Rio T."/>
            <person name="Dalin E."/>
            <person name="Tice H."/>
            <person name="Pitluck S."/>
            <person name="Chain P."/>
            <person name="Malfatti S."/>
            <person name="Shin M."/>
            <person name="Vergez L."/>
            <person name="Lang D."/>
            <person name="Schmutz J."/>
            <person name="Larimer F."/>
            <person name="Land M."/>
            <person name="Hauser L."/>
            <person name="Kyrpides N."/>
            <person name="Lykidis A."/>
            <person name="Ramette A."/>
            <person name="Konstantinidis K."/>
            <person name="Tiedje J."/>
            <person name="Richardson P."/>
        </authorList>
    </citation>
    <scope>NUCLEOTIDE SEQUENCE [LARGE SCALE GENOMIC DNA]</scope>
    <source>
        <strain>MC40-6</strain>
    </source>
</reference>
<proteinExistence type="inferred from homology"/>
<dbReference type="EC" id="2.1.2.3" evidence="1"/>
<dbReference type="EC" id="3.5.4.10" evidence="1"/>
<dbReference type="EMBL" id="CP001025">
    <property type="protein sequence ID" value="ACB63107.1"/>
    <property type="molecule type" value="Genomic_DNA"/>
</dbReference>
<dbReference type="RefSeq" id="WP_012363106.1">
    <property type="nucleotide sequence ID" value="NC_010551.1"/>
</dbReference>
<dbReference type="SMR" id="B1YTE2"/>
<dbReference type="KEGG" id="bac:BamMC406_0610"/>
<dbReference type="HOGENOM" id="CLU_016316_5_2_4"/>
<dbReference type="OrthoDB" id="9802065at2"/>
<dbReference type="UniPathway" id="UPA00074">
    <property type="reaction ID" value="UER00133"/>
</dbReference>
<dbReference type="UniPathway" id="UPA00074">
    <property type="reaction ID" value="UER00135"/>
</dbReference>
<dbReference type="Proteomes" id="UP000001680">
    <property type="component" value="Chromosome 1"/>
</dbReference>
<dbReference type="GO" id="GO:0005829">
    <property type="term" value="C:cytosol"/>
    <property type="evidence" value="ECO:0007669"/>
    <property type="project" value="TreeGrafter"/>
</dbReference>
<dbReference type="GO" id="GO:0003937">
    <property type="term" value="F:IMP cyclohydrolase activity"/>
    <property type="evidence" value="ECO:0007669"/>
    <property type="project" value="UniProtKB-UniRule"/>
</dbReference>
<dbReference type="GO" id="GO:0004643">
    <property type="term" value="F:phosphoribosylaminoimidazolecarboxamide formyltransferase activity"/>
    <property type="evidence" value="ECO:0007669"/>
    <property type="project" value="UniProtKB-UniRule"/>
</dbReference>
<dbReference type="GO" id="GO:0006189">
    <property type="term" value="P:'de novo' IMP biosynthetic process"/>
    <property type="evidence" value="ECO:0007669"/>
    <property type="project" value="UniProtKB-UniRule"/>
</dbReference>
<dbReference type="CDD" id="cd01421">
    <property type="entry name" value="IMPCH"/>
    <property type="match status" value="1"/>
</dbReference>
<dbReference type="FunFam" id="3.40.140.20:FF:000001">
    <property type="entry name" value="Bifunctional purine biosynthesis protein PurH"/>
    <property type="match status" value="1"/>
</dbReference>
<dbReference type="FunFam" id="3.40.140.20:FF:000002">
    <property type="entry name" value="Bifunctional purine biosynthesis protein PurH"/>
    <property type="match status" value="1"/>
</dbReference>
<dbReference type="FunFam" id="3.40.50.1380:FF:000001">
    <property type="entry name" value="Bifunctional purine biosynthesis protein PurH"/>
    <property type="match status" value="1"/>
</dbReference>
<dbReference type="Gene3D" id="3.40.140.20">
    <property type="match status" value="2"/>
</dbReference>
<dbReference type="Gene3D" id="3.40.50.1380">
    <property type="entry name" value="Methylglyoxal synthase-like domain"/>
    <property type="match status" value="1"/>
</dbReference>
<dbReference type="HAMAP" id="MF_00139">
    <property type="entry name" value="PurH"/>
    <property type="match status" value="1"/>
</dbReference>
<dbReference type="InterPro" id="IPR024051">
    <property type="entry name" value="AICAR_Tfase_dup_dom_sf"/>
</dbReference>
<dbReference type="InterPro" id="IPR016193">
    <property type="entry name" value="Cytidine_deaminase-like"/>
</dbReference>
<dbReference type="InterPro" id="IPR011607">
    <property type="entry name" value="MGS-like_dom"/>
</dbReference>
<dbReference type="InterPro" id="IPR036914">
    <property type="entry name" value="MGS-like_dom_sf"/>
</dbReference>
<dbReference type="InterPro" id="IPR002695">
    <property type="entry name" value="PurH-like"/>
</dbReference>
<dbReference type="NCBIfam" id="NF002049">
    <property type="entry name" value="PRK00881.1"/>
    <property type="match status" value="1"/>
</dbReference>
<dbReference type="NCBIfam" id="TIGR00355">
    <property type="entry name" value="purH"/>
    <property type="match status" value="1"/>
</dbReference>
<dbReference type="PANTHER" id="PTHR11692:SF0">
    <property type="entry name" value="BIFUNCTIONAL PURINE BIOSYNTHESIS PROTEIN ATIC"/>
    <property type="match status" value="1"/>
</dbReference>
<dbReference type="PANTHER" id="PTHR11692">
    <property type="entry name" value="BIFUNCTIONAL PURINE BIOSYNTHESIS PROTEIN PURH"/>
    <property type="match status" value="1"/>
</dbReference>
<dbReference type="Pfam" id="PF01808">
    <property type="entry name" value="AICARFT_IMPCHas"/>
    <property type="match status" value="1"/>
</dbReference>
<dbReference type="Pfam" id="PF02142">
    <property type="entry name" value="MGS"/>
    <property type="match status" value="1"/>
</dbReference>
<dbReference type="PIRSF" id="PIRSF000414">
    <property type="entry name" value="AICARFT_IMPCHas"/>
    <property type="match status" value="1"/>
</dbReference>
<dbReference type="SMART" id="SM00798">
    <property type="entry name" value="AICARFT_IMPCHas"/>
    <property type="match status" value="1"/>
</dbReference>
<dbReference type="SMART" id="SM00851">
    <property type="entry name" value="MGS"/>
    <property type="match status" value="1"/>
</dbReference>
<dbReference type="SUPFAM" id="SSF53927">
    <property type="entry name" value="Cytidine deaminase-like"/>
    <property type="match status" value="1"/>
</dbReference>
<dbReference type="SUPFAM" id="SSF52335">
    <property type="entry name" value="Methylglyoxal synthase-like"/>
    <property type="match status" value="1"/>
</dbReference>
<dbReference type="PROSITE" id="PS51855">
    <property type="entry name" value="MGS"/>
    <property type="match status" value="1"/>
</dbReference>
<protein>
    <recommendedName>
        <fullName evidence="1">Bifunctional purine biosynthesis protein PurH</fullName>
    </recommendedName>
    <domain>
        <recommendedName>
            <fullName evidence="1">Phosphoribosylaminoimidazolecarboxamide formyltransferase</fullName>
            <ecNumber evidence="1">2.1.2.3</ecNumber>
        </recommendedName>
        <alternativeName>
            <fullName evidence="1">AICAR transformylase</fullName>
        </alternativeName>
    </domain>
    <domain>
        <recommendedName>
            <fullName evidence="1">IMP cyclohydrolase</fullName>
            <ecNumber evidence="1">3.5.4.10</ecNumber>
        </recommendedName>
        <alternativeName>
            <fullName evidence="1">ATIC</fullName>
        </alternativeName>
        <alternativeName>
            <fullName evidence="1">IMP synthase</fullName>
        </alternativeName>
        <alternativeName>
            <fullName evidence="1">Inosinicase</fullName>
        </alternativeName>
    </domain>
</protein>
<name>PUR9_BURA4</name>